<comment type="function">
    <text evidence="1">NAD-binding protein involved in the addition of a carboxymethylaminomethyl (cmnm) group at the wobble position (U34) of certain tRNAs, forming tRNA-cmnm(5)s(2)U34.</text>
</comment>
<comment type="cofactor">
    <cofactor evidence="1">
        <name>FAD</name>
        <dbReference type="ChEBI" id="CHEBI:57692"/>
    </cofactor>
</comment>
<comment type="subunit">
    <text evidence="1">Homodimer. Heterotetramer of two MnmE and two MnmG subunits.</text>
</comment>
<comment type="subcellular location">
    <subcellularLocation>
        <location evidence="1">Cytoplasm</location>
    </subcellularLocation>
</comment>
<comment type="similarity">
    <text evidence="1">Belongs to the MnmG family.</text>
</comment>
<organism>
    <name type="scientific">Salmonella typhi</name>
    <dbReference type="NCBI Taxonomy" id="90370"/>
    <lineage>
        <taxon>Bacteria</taxon>
        <taxon>Pseudomonadati</taxon>
        <taxon>Pseudomonadota</taxon>
        <taxon>Gammaproteobacteria</taxon>
        <taxon>Enterobacterales</taxon>
        <taxon>Enterobacteriaceae</taxon>
        <taxon>Salmonella</taxon>
    </lineage>
</organism>
<proteinExistence type="inferred from homology"/>
<accession>Q8Z2Q7</accession>
<feature type="chain" id="PRO_0000117170" description="tRNA uridine 5-carboxymethylaminomethyl modification enzyme MnmG">
    <location>
        <begin position="1"/>
        <end position="629"/>
    </location>
</feature>
<feature type="binding site" evidence="1">
    <location>
        <begin position="13"/>
        <end position="18"/>
    </location>
    <ligand>
        <name>FAD</name>
        <dbReference type="ChEBI" id="CHEBI:57692"/>
    </ligand>
</feature>
<feature type="binding site" evidence="1">
    <location>
        <position position="125"/>
    </location>
    <ligand>
        <name>FAD</name>
        <dbReference type="ChEBI" id="CHEBI:57692"/>
    </ligand>
</feature>
<feature type="binding site" evidence="1">
    <location>
        <position position="180"/>
    </location>
    <ligand>
        <name>FAD</name>
        <dbReference type="ChEBI" id="CHEBI:57692"/>
    </ligand>
</feature>
<feature type="binding site" evidence="1">
    <location>
        <begin position="273"/>
        <end position="287"/>
    </location>
    <ligand>
        <name>NAD(+)</name>
        <dbReference type="ChEBI" id="CHEBI:57540"/>
    </ligand>
</feature>
<feature type="binding site" evidence="1">
    <location>
        <position position="370"/>
    </location>
    <ligand>
        <name>FAD</name>
        <dbReference type="ChEBI" id="CHEBI:57692"/>
    </ligand>
</feature>
<keyword id="KW-0963">Cytoplasm</keyword>
<keyword id="KW-0274">FAD</keyword>
<keyword id="KW-0285">Flavoprotein</keyword>
<keyword id="KW-0520">NAD</keyword>
<keyword id="KW-0819">tRNA processing</keyword>
<gene>
    <name evidence="1" type="primary">mnmG</name>
    <name evidence="1" type="synonym">gidA</name>
    <name type="ordered locus">STY3904</name>
    <name type="ordered locus">t3645</name>
</gene>
<dbReference type="EMBL" id="AL513382">
    <property type="protein sequence ID" value="CAD03121.1"/>
    <property type="molecule type" value="Genomic_DNA"/>
</dbReference>
<dbReference type="EMBL" id="AE014613">
    <property type="protein sequence ID" value="AAO71142.1"/>
    <property type="molecule type" value="Genomic_DNA"/>
</dbReference>
<dbReference type="RefSeq" id="NP_458069.1">
    <property type="nucleotide sequence ID" value="NC_003198.1"/>
</dbReference>
<dbReference type="RefSeq" id="WP_000499882.1">
    <property type="nucleotide sequence ID" value="NZ_WSUR01000023.1"/>
</dbReference>
<dbReference type="SMR" id="Q8Z2Q7"/>
<dbReference type="STRING" id="220341.gene:17587764"/>
<dbReference type="KEGG" id="stt:t3645"/>
<dbReference type="KEGG" id="sty:STY3904"/>
<dbReference type="PATRIC" id="fig|220341.7.peg.3984"/>
<dbReference type="eggNOG" id="COG0445">
    <property type="taxonomic scope" value="Bacteria"/>
</dbReference>
<dbReference type="HOGENOM" id="CLU_007831_2_2_6"/>
<dbReference type="OMA" id="CNPAMGG"/>
<dbReference type="OrthoDB" id="9815560at2"/>
<dbReference type="Proteomes" id="UP000000541">
    <property type="component" value="Chromosome"/>
</dbReference>
<dbReference type="Proteomes" id="UP000002670">
    <property type="component" value="Chromosome"/>
</dbReference>
<dbReference type="GO" id="GO:0005829">
    <property type="term" value="C:cytosol"/>
    <property type="evidence" value="ECO:0007669"/>
    <property type="project" value="TreeGrafter"/>
</dbReference>
<dbReference type="GO" id="GO:0050660">
    <property type="term" value="F:flavin adenine dinucleotide binding"/>
    <property type="evidence" value="ECO:0007669"/>
    <property type="project" value="UniProtKB-UniRule"/>
</dbReference>
<dbReference type="GO" id="GO:0030488">
    <property type="term" value="P:tRNA methylation"/>
    <property type="evidence" value="ECO:0007669"/>
    <property type="project" value="TreeGrafter"/>
</dbReference>
<dbReference type="GO" id="GO:0002098">
    <property type="term" value="P:tRNA wobble uridine modification"/>
    <property type="evidence" value="ECO:0007669"/>
    <property type="project" value="InterPro"/>
</dbReference>
<dbReference type="FunFam" id="1.10.10.1800:FF:000001">
    <property type="entry name" value="tRNA uridine 5-carboxymethylaminomethyl modification enzyme MnmG"/>
    <property type="match status" value="1"/>
</dbReference>
<dbReference type="FunFam" id="1.10.150.570:FF:000001">
    <property type="entry name" value="tRNA uridine 5-carboxymethylaminomethyl modification enzyme MnmG"/>
    <property type="match status" value="1"/>
</dbReference>
<dbReference type="FunFam" id="3.50.50.60:FF:000002">
    <property type="entry name" value="tRNA uridine 5-carboxymethylaminomethyl modification enzyme MnmG"/>
    <property type="match status" value="1"/>
</dbReference>
<dbReference type="FunFam" id="3.50.50.60:FF:000010">
    <property type="entry name" value="tRNA uridine 5-carboxymethylaminomethyl modification enzyme MnmG"/>
    <property type="match status" value="1"/>
</dbReference>
<dbReference type="Gene3D" id="3.50.50.60">
    <property type="entry name" value="FAD/NAD(P)-binding domain"/>
    <property type="match status" value="2"/>
</dbReference>
<dbReference type="Gene3D" id="1.10.150.570">
    <property type="entry name" value="GidA associated domain, C-terminal subdomain"/>
    <property type="match status" value="1"/>
</dbReference>
<dbReference type="Gene3D" id="1.10.10.1800">
    <property type="entry name" value="tRNA uridine 5-carboxymethylaminomethyl modification enzyme MnmG/GidA"/>
    <property type="match status" value="1"/>
</dbReference>
<dbReference type="HAMAP" id="MF_00129">
    <property type="entry name" value="MnmG_GidA"/>
    <property type="match status" value="1"/>
</dbReference>
<dbReference type="InterPro" id="IPR036188">
    <property type="entry name" value="FAD/NAD-bd_sf"/>
</dbReference>
<dbReference type="InterPro" id="IPR049312">
    <property type="entry name" value="GIDA_C_N"/>
</dbReference>
<dbReference type="InterPro" id="IPR004416">
    <property type="entry name" value="MnmG"/>
</dbReference>
<dbReference type="InterPro" id="IPR002218">
    <property type="entry name" value="MnmG-rel"/>
</dbReference>
<dbReference type="InterPro" id="IPR020595">
    <property type="entry name" value="MnmG-rel_CS"/>
</dbReference>
<dbReference type="InterPro" id="IPR026904">
    <property type="entry name" value="MnmG_C"/>
</dbReference>
<dbReference type="InterPro" id="IPR047001">
    <property type="entry name" value="MnmG_C_subdom"/>
</dbReference>
<dbReference type="InterPro" id="IPR044920">
    <property type="entry name" value="MnmG_C_subdom_sf"/>
</dbReference>
<dbReference type="InterPro" id="IPR040131">
    <property type="entry name" value="MnmG_N"/>
</dbReference>
<dbReference type="NCBIfam" id="TIGR00136">
    <property type="entry name" value="mnmG_gidA"/>
    <property type="match status" value="1"/>
</dbReference>
<dbReference type="PANTHER" id="PTHR11806">
    <property type="entry name" value="GLUCOSE INHIBITED DIVISION PROTEIN A"/>
    <property type="match status" value="1"/>
</dbReference>
<dbReference type="PANTHER" id="PTHR11806:SF0">
    <property type="entry name" value="PROTEIN MTO1 HOMOLOG, MITOCHONDRIAL"/>
    <property type="match status" value="1"/>
</dbReference>
<dbReference type="Pfam" id="PF01134">
    <property type="entry name" value="GIDA"/>
    <property type="match status" value="1"/>
</dbReference>
<dbReference type="Pfam" id="PF21680">
    <property type="entry name" value="GIDA_C_1st"/>
    <property type="match status" value="1"/>
</dbReference>
<dbReference type="Pfam" id="PF13932">
    <property type="entry name" value="SAM_GIDA_C"/>
    <property type="match status" value="1"/>
</dbReference>
<dbReference type="SMART" id="SM01228">
    <property type="entry name" value="GIDA_assoc_3"/>
    <property type="match status" value="1"/>
</dbReference>
<dbReference type="SUPFAM" id="SSF51905">
    <property type="entry name" value="FAD/NAD(P)-binding domain"/>
    <property type="match status" value="1"/>
</dbReference>
<dbReference type="PROSITE" id="PS01280">
    <property type="entry name" value="GIDA_1"/>
    <property type="match status" value="1"/>
</dbReference>
<dbReference type="PROSITE" id="PS01281">
    <property type="entry name" value="GIDA_2"/>
    <property type="match status" value="1"/>
</dbReference>
<sequence>MFYQDPFDVIIIGGGHAGTEAAMAAARMGQQTLLLTHNIDTLGQMSCNPTIGGIGKGHLVKEVDALGGLMAKAIDQAGIQFKILNASKGPAVRATRAQADRVLYRQAVRIALENQPNLMIFQQAVEDLIVENDRVVGAVTQMGLKFRAKAVVLTVGTFLDGKIHIGLDNYSGGRAGDPPSIPLSRRLRELPLRVSRLKTGTPPRIDARTIDFSVLAQQHGDNPMPVFSFMGNAFQHPQQVPCYITHTNEKTHDVIRNNLDRSPMYAGVIEGIGPRYCPSIEDKVMRFADRNQHQIFLEPEGLTSNEIYPNGISTSLPFDVQMQIVRSMQGMENAKIVRPGYAIEYDFFDPRDLKPTLESKFIHGLFFAGQINGTTGYEEAAAQGLLAGLNAARLSADKEGWAPARSQAYLGVLVDDLCTLGTKEPYRMFTSRAEYRLMLREDNADLRLTEMGRELGLVDDERWARFNEKLENIERERQRLKSTWVTPSAESADEVNAHLTTPLSREASGEDLLRRPEMTYAQLTSLAAFAPALEDEQAAEQVEIQVKYEGYIARQQDEIEKQLRNENTLLPATLDYRQVSGLSNEVIAKLNDHKPASIGQASRISGVTPAAISILLVWLKKQGMLRRSA</sequence>
<evidence type="ECO:0000255" key="1">
    <source>
        <dbReference type="HAMAP-Rule" id="MF_00129"/>
    </source>
</evidence>
<name>MNMG_SALTI</name>
<reference key="1">
    <citation type="journal article" date="2001" name="Nature">
        <title>Complete genome sequence of a multiple drug resistant Salmonella enterica serovar Typhi CT18.</title>
        <authorList>
            <person name="Parkhill J."/>
            <person name="Dougan G."/>
            <person name="James K.D."/>
            <person name="Thomson N.R."/>
            <person name="Pickard D."/>
            <person name="Wain J."/>
            <person name="Churcher C.M."/>
            <person name="Mungall K.L."/>
            <person name="Bentley S.D."/>
            <person name="Holden M.T.G."/>
            <person name="Sebaihia M."/>
            <person name="Baker S."/>
            <person name="Basham D."/>
            <person name="Brooks K."/>
            <person name="Chillingworth T."/>
            <person name="Connerton P."/>
            <person name="Cronin A."/>
            <person name="Davis P."/>
            <person name="Davies R.M."/>
            <person name="Dowd L."/>
            <person name="White N."/>
            <person name="Farrar J."/>
            <person name="Feltwell T."/>
            <person name="Hamlin N."/>
            <person name="Haque A."/>
            <person name="Hien T.T."/>
            <person name="Holroyd S."/>
            <person name="Jagels K."/>
            <person name="Krogh A."/>
            <person name="Larsen T.S."/>
            <person name="Leather S."/>
            <person name="Moule S."/>
            <person name="O'Gaora P."/>
            <person name="Parry C."/>
            <person name="Quail M.A."/>
            <person name="Rutherford K.M."/>
            <person name="Simmonds M."/>
            <person name="Skelton J."/>
            <person name="Stevens K."/>
            <person name="Whitehead S."/>
            <person name="Barrell B.G."/>
        </authorList>
    </citation>
    <scope>NUCLEOTIDE SEQUENCE [LARGE SCALE GENOMIC DNA]</scope>
    <source>
        <strain>CT18</strain>
    </source>
</reference>
<reference key="2">
    <citation type="journal article" date="2003" name="J. Bacteriol.">
        <title>Comparative genomics of Salmonella enterica serovar Typhi strains Ty2 and CT18.</title>
        <authorList>
            <person name="Deng W."/>
            <person name="Liou S.-R."/>
            <person name="Plunkett G. III"/>
            <person name="Mayhew G.F."/>
            <person name="Rose D.J."/>
            <person name="Burland V."/>
            <person name="Kodoyianni V."/>
            <person name="Schwartz D.C."/>
            <person name="Blattner F.R."/>
        </authorList>
    </citation>
    <scope>NUCLEOTIDE SEQUENCE [LARGE SCALE GENOMIC DNA]</scope>
    <source>
        <strain>ATCC 700931 / Ty2</strain>
    </source>
</reference>
<protein>
    <recommendedName>
        <fullName evidence="1">tRNA uridine 5-carboxymethylaminomethyl modification enzyme MnmG</fullName>
    </recommendedName>
    <alternativeName>
        <fullName evidence="1">Glucose-inhibited division protein A</fullName>
    </alternativeName>
</protein>